<organism>
    <name type="scientific">Emericella nidulans (strain FGSC A4 / ATCC 38163 / CBS 112.46 / NRRL 194 / M139)</name>
    <name type="common">Aspergillus nidulans</name>
    <dbReference type="NCBI Taxonomy" id="227321"/>
    <lineage>
        <taxon>Eukaryota</taxon>
        <taxon>Fungi</taxon>
        <taxon>Dikarya</taxon>
        <taxon>Ascomycota</taxon>
        <taxon>Pezizomycotina</taxon>
        <taxon>Eurotiomycetes</taxon>
        <taxon>Eurotiomycetidae</taxon>
        <taxon>Eurotiales</taxon>
        <taxon>Aspergillaceae</taxon>
        <taxon>Aspergillus</taxon>
        <taxon>Aspergillus subgen. Nidulantes</taxon>
    </lineage>
</organism>
<keyword id="KW-0963">Cytoplasm</keyword>
<keyword id="KW-0479">Metal-binding</keyword>
<keyword id="KW-0539">Nucleus</keyword>
<keyword id="KW-1185">Reference proteome</keyword>
<keyword id="KW-0862">Zinc</keyword>
<keyword id="KW-0863">Zinc-finger</keyword>
<proteinExistence type="inferred from homology"/>
<evidence type="ECO:0000250" key="1"/>
<evidence type="ECO:0000255" key="2">
    <source>
        <dbReference type="PROSITE-ProRule" id="PRU00058"/>
    </source>
</evidence>
<evidence type="ECO:0000255" key="3">
    <source>
        <dbReference type="PROSITE-ProRule" id="PRU00126"/>
    </source>
</evidence>
<evidence type="ECO:0000255" key="4">
    <source>
        <dbReference type="PROSITE-ProRule" id="PRU01215"/>
    </source>
</evidence>
<evidence type="ECO:0000305" key="5"/>
<feature type="chain" id="PRO_0000292459" description="Protein fyv10">
    <location>
        <begin position="1"/>
        <end position="406"/>
    </location>
</feature>
<feature type="domain" description="LisH" evidence="3">
    <location>
        <begin position="126"/>
        <end position="158"/>
    </location>
</feature>
<feature type="domain" description="CTLH" evidence="2">
    <location>
        <begin position="164"/>
        <end position="221"/>
    </location>
</feature>
<feature type="zinc finger region" description="RING-Gid-type" evidence="4">
    <location>
        <begin position="329"/>
        <end position="391"/>
    </location>
</feature>
<reference key="1">
    <citation type="journal article" date="2005" name="Nature">
        <title>Sequencing of Aspergillus nidulans and comparative analysis with A. fumigatus and A. oryzae.</title>
        <authorList>
            <person name="Galagan J.E."/>
            <person name="Calvo S.E."/>
            <person name="Cuomo C."/>
            <person name="Ma L.-J."/>
            <person name="Wortman J.R."/>
            <person name="Batzoglou S."/>
            <person name="Lee S.-I."/>
            <person name="Bastuerkmen M."/>
            <person name="Spevak C.C."/>
            <person name="Clutterbuck J."/>
            <person name="Kapitonov V."/>
            <person name="Jurka J."/>
            <person name="Scazzocchio C."/>
            <person name="Farman M.L."/>
            <person name="Butler J."/>
            <person name="Purcell S."/>
            <person name="Harris S."/>
            <person name="Braus G.H."/>
            <person name="Draht O."/>
            <person name="Busch S."/>
            <person name="D'Enfert C."/>
            <person name="Bouchier C."/>
            <person name="Goldman G.H."/>
            <person name="Bell-Pedersen D."/>
            <person name="Griffiths-Jones S."/>
            <person name="Doonan J.H."/>
            <person name="Yu J."/>
            <person name="Vienken K."/>
            <person name="Pain A."/>
            <person name="Freitag M."/>
            <person name="Selker E.U."/>
            <person name="Archer D.B."/>
            <person name="Penalva M.A."/>
            <person name="Oakley B.R."/>
            <person name="Momany M."/>
            <person name="Tanaka T."/>
            <person name="Kumagai T."/>
            <person name="Asai K."/>
            <person name="Machida M."/>
            <person name="Nierman W.C."/>
            <person name="Denning D.W."/>
            <person name="Caddick M.X."/>
            <person name="Hynes M."/>
            <person name="Paoletti M."/>
            <person name="Fischer R."/>
            <person name="Miller B.L."/>
            <person name="Dyer P.S."/>
            <person name="Sachs M.S."/>
            <person name="Osmani S.A."/>
            <person name="Birren B.W."/>
        </authorList>
    </citation>
    <scope>NUCLEOTIDE SEQUENCE [LARGE SCALE GENOMIC DNA]</scope>
    <source>
        <strain>FGSC A4 / ATCC 38163 / CBS 112.46 / NRRL 194 / M139</strain>
    </source>
</reference>
<reference key="2">
    <citation type="journal article" date="2009" name="Fungal Genet. Biol.">
        <title>The 2008 update of the Aspergillus nidulans genome annotation: a community effort.</title>
        <authorList>
            <person name="Wortman J.R."/>
            <person name="Gilsenan J.M."/>
            <person name="Joardar V."/>
            <person name="Deegan J."/>
            <person name="Clutterbuck J."/>
            <person name="Andersen M.R."/>
            <person name="Archer D."/>
            <person name="Bencina M."/>
            <person name="Braus G."/>
            <person name="Coutinho P."/>
            <person name="von Dohren H."/>
            <person name="Doonan J."/>
            <person name="Driessen A.J."/>
            <person name="Durek P."/>
            <person name="Espeso E."/>
            <person name="Fekete E."/>
            <person name="Flipphi M."/>
            <person name="Estrada C.G."/>
            <person name="Geysens S."/>
            <person name="Goldman G."/>
            <person name="de Groot P.W."/>
            <person name="Hansen K."/>
            <person name="Harris S.D."/>
            <person name="Heinekamp T."/>
            <person name="Helmstaedt K."/>
            <person name="Henrissat B."/>
            <person name="Hofmann G."/>
            <person name="Homan T."/>
            <person name="Horio T."/>
            <person name="Horiuchi H."/>
            <person name="James S."/>
            <person name="Jones M."/>
            <person name="Karaffa L."/>
            <person name="Karanyi Z."/>
            <person name="Kato M."/>
            <person name="Keller N."/>
            <person name="Kelly D.E."/>
            <person name="Kiel J.A."/>
            <person name="Kim J.M."/>
            <person name="van der Klei I.J."/>
            <person name="Klis F.M."/>
            <person name="Kovalchuk A."/>
            <person name="Krasevec N."/>
            <person name="Kubicek C.P."/>
            <person name="Liu B."/>
            <person name="Maccabe A."/>
            <person name="Meyer V."/>
            <person name="Mirabito P."/>
            <person name="Miskei M."/>
            <person name="Mos M."/>
            <person name="Mullins J."/>
            <person name="Nelson D.R."/>
            <person name="Nielsen J."/>
            <person name="Oakley B.R."/>
            <person name="Osmani S.A."/>
            <person name="Pakula T."/>
            <person name="Paszewski A."/>
            <person name="Paulsen I."/>
            <person name="Pilsyk S."/>
            <person name="Pocsi I."/>
            <person name="Punt P.J."/>
            <person name="Ram A.F."/>
            <person name="Ren Q."/>
            <person name="Robellet X."/>
            <person name="Robson G."/>
            <person name="Seiboth B."/>
            <person name="van Solingen P."/>
            <person name="Specht T."/>
            <person name="Sun J."/>
            <person name="Taheri-Talesh N."/>
            <person name="Takeshita N."/>
            <person name="Ussery D."/>
            <person name="vanKuyk P.A."/>
            <person name="Visser H."/>
            <person name="van de Vondervoort P.J."/>
            <person name="de Vries R.P."/>
            <person name="Walton J."/>
            <person name="Xiang X."/>
            <person name="Xiong Y."/>
            <person name="Zeng A.P."/>
            <person name="Brandt B.W."/>
            <person name="Cornell M.J."/>
            <person name="van den Hondel C.A."/>
            <person name="Visser J."/>
            <person name="Oliver S.G."/>
            <person name="Turner G."/>
        </authorList>
    </citation>
    <scope>GENOME REANNOTATION</scope>
    <source>
        <strain>FGSC A4 / ATCC 38163 / CBS 112.46 / NRRL 194 / M139</strain>
    </source>
</reference>
<protein>
    <recommendedName>
        <fullName>Protein fyv10</fullName>
    </recommendedName>
</protein>
<accession>Q5AS80</accession>
<accession>C8V9H9</accession>
<name>FYV10_EMENI</name>
<gene>
    <name type="primary">fyv10</name>
    <name type="ORF">AN8850</name>
</gene>
<dbReference type="EMBL" id="AACD01000163">
    <property type="protein sequence ID" value="EAA60138.1"/>
    <property type="status" value="ALT_SEQ"/>
    <property type="molecule type" value="Genomic_DNA"/>
</dbReference>
<dbReference type="EMBL" id="BN001303">
    <property type="protein sequence ID" value="CBF77885.1"/>
    <property type="status" value="ALT_SEQ"/>
    <property type="molecule type" value="Genomic_DNA"/>
</dbReference>
<dbReference type="RefSeq" id="XP_682119.1">
    <property type="nucleotide sequence ID" value="XM_677027.1"/>
</dbReference>
<dbReference type="SMR" id="Q5AS80"/>
<dbReference type="FunCoup" id="Q5AS80">
    <property type="interactions" value="894"/>
</dbReference>
<dbReference type="STRING" id="227321.Q5AS80"/>
<dbReference type="KEGG" id="ani:ANIA_08850"/>
<dbReference type="VEuPathDB" id="FungiDB:AN8850"/>
<dbReference type="eggNOG" id="KOG0396">
    <property type="taxonomic scope" value="Eukaryota"/>
</dbReference>
<dbReference type="HOGENOM" id="CLU_027445_2_0_1"/>
<dbReference type="InParanoid" id="Q5AS80"/>
<dbReference type="OrthoDB" id="1933455at2759"/>
<dbReference type="Proteomes" id="UP000000560">
    <property type="component" value="Chromosome III"/>
</dbReference>
<dbReference type="GO" id="GO:0005737">
    <property type="term" value="C:cytoplasm"/>
    <property type="evidence" value="ECO:0000318"/>
    <property type="project" value="GO_Central"/>
</dbReference>
<dbReference type="GO" id="GO:0034657">
    <property type="term" value="C:GID complex"/>
    <property type="evidence" value="ECO:0000318"/>
    <property type="project" value="GO_Central"/>
</dbReference>
<dbReference type="GO" id="GO:0005634">
    <property type="term" value="C:nucleus"/>
    <property type="evidence" value="ECO:0000318"/>
    <property type="project" value="GO_Central"/>
</dbReference>
<dbReference type="GO" id="GO:0061630">
    <property type="term" value="F:ubiquitin protein ligase activity"/>
    <property type="evidence" value="ECO:0007669"/>
    <property type="project" value="InterPro"/>
</dbReference>
<dbReference type="GO" id="GO:0008270">
    <property type="term" value="F:zinc ion binding"/>
    <property type="evidence" value="ECO:0007669"/>
    <property type="project" value="UniProtKB-KW"/>
</dbReference>
<dbReference type="GO" id="GO:0045721">
    <property type="term" value="P:negative regulation of gluconeogenesis"/>
    <property type="evidence" value="ECO:0007669"/>
    <property type="project" value="UniProtKB-ARBA"/>
</dbReference>
<dbReference type="GO" id="GO:0043161">
    <property type="term" value="P:proteasome-mediated ubiquitin-dependent protein catabolic process"/>
    <property type="evidence" value="ECO:0000318"/>
    <property type="project" value="GO_Central"/>
</dbReference>
<dbReference type="InterPro" id="IPR013144">
    <property type="entry name" value="CRA_dom"/>
</dbReference>
<dbReference type="InterPro" id="IPR024964">
    <property type="entry name" value="CTLH/CRA"/>
</dbReference>
<dbReference type="InterPro" id="IPR006595">
    <property type="entry name" value="CTLH_C"/>
</dbReference>
<dbReference type="InterPro" id="IPR045098">
    <property type="entry name" value="Fyv10_fam"/>
</dbReference>
<dbReference type="InterPro" id="IPR006594">
    <property type="entry name" value="LisH"/>
</dbReference>
<dbReference type="InterPro" id="IPR044063">
    <property type="entry name" value="ZF_RING_GID"/>
</dbReference>
<dbReference type="PANTHER" id="PTHR12170:SF2">
    <property type="entry name" value="E3 UBIQUITIN-PROTEIN TRANSFERASE MAEA"/>
    <property type="match status" value="1"/>
</dbReference>
<dbReference type="PANTHER" id="PTHR12170">
    <property type="entry name" value="MACROPHAGE ERYTHROBLAST ATTACHER-RELATED"/>
    <property type="match status" value="1"/>
</dbReference>
<dbReference type="Pfam" id="PF10607">
    <property type="entry name" value="CTLH"/>
    <property type="match status" value="1"/>
</dbReference>
<dbReference type="SMART" id="SM00757">
    <property type="entry name" value="CRA"/>
    <property type="match status" value="1"/>
</dbReference>
<dbReference type="SMART" id="SM00668">
    <property type="entry name" value="CTLH"/>
    <property type="match status" value="1"/>
</dbReference>
<dbReference type="SMART" id="SM00667">
    <property type="entry name" value="LisH"/>
    <property type="match status" value="1"/>
</dbReference>
<dbReference type="PROSITE" id="PS50897">
    <property type="entry name" value="CTLH"/>
    <property type="match status" value="1"/>
</dbReference>
<dbReference type="PROSITE" id="PS50896">
    <property type="entry name" value="LISH"/>
    <property type="match status" value="1"/>
</dbReference>
<dbReference type="PROSITE" id="PS51867">
    <property type="entry name" value="ZF_RING_GID"/>
    <property type="match status" value="1"/>
</dbReference>
<comment type="function">
    <text evidence="1">Involved in the proteasome-dependent degradation of fructose-1,6-bisphosphatase.</text>
</comment>
<comment type="subcellular location">
    <subcellularLocation>
        <location evidence="1">Cytoplasm</location>
    </subcellularLocation>
    <subcellularLocation>
        <location evidence="1">Nucleus</location>
    </subcellularLocation>
</comment>
<comment type="similarity">
    <text evidence="5">Belongs to the FYV10 family.</text>
</comment>
<comment type="sequence caution" evidence="5">
    <conflict type="erroneous gene model prediction">
        <sequence resource="EMBL-CDS" id="CBF77885"/>
    </conflict>
</comment>
<comment type="sequence caution" evidence="5">
    <conflict type="erroneous gene model prediction">
        <sequence resource="EMBL-CDS" id="EAA60138"/>
    </conflict>
</comment>
<sequence length="406" mass="46596">MAAELTSTKLNAENHLLLDQPLLRLPHELARRNLKSFQRIVEREKEYVLPALKEAAKASMSGNQTPEQTLATLDVMISRMQGLKRKMENLQQEEKKIHHQSRKRIQHLNQLYQIPSLTDVKYDQWSRVRLDRLVIDHMLRSGYSESAQRLARAKNIEELVDLNVFVQCQRIAESLRNGETKDALQWCNENKAALKKSQYNLEFELRLQQYIEMIRTRDRAKFVDAMVHARRYLAPYDETQSAEIRRAAGLLAFPPNTRAEPYKSMYASERWVYLSELFIRTHHELLSLPSRPLMHIALSAGLSALKTPACHSAYTSSSSNSHSTATSVCPICSTELNELARNLPYANHTKSSVENDPVVLPNGRVYGLHRLLDMSKKLSSLEAGKVRDPTTGEIFNESELKKVYIM</sequence>